<name>ABDH_SHISS</name>
<keyword id="KW-0520">NAD</keyword>
<keyword id="KW-0560">Oxidoreductase</keyword>
<keyword id="KW-1185">Reference proteome</keyword>
<proteinExistence type="inferred from homology"/>
<reference key="1">
    <citation type="journal article" date="2005" name="Nucleic Acids Res.">
        <title>Genome dynamics and diversity of Shigella species, the etiologic agents of bacillary dysentery.</title>
        <authorList>
            <person name="Yang F."/>
            <person name="Yang J."/>
            <person name="Zhang X."/>
            <person name="Chen L."/>
            <person name="Jiang Y."/>
            <person name="Yan Y."/>
            <person name="Tang X."/>
            <person name="Wang J."/>
            <person name="Xiong Z."/>
            <person name="Dong J."/>
            <person name="Xue Y."/>
            <person name="Zhu Y."/>
            <person name="Xu X."/>
            <person name="Sun L."/>
            <person name="Chen S."/>
            <person name="Nie H."/>
            <person name="Peng J."/>
            <person name="Xu J."/>
            <person name="Wang Y."/>
            <person name="Yuan Z."/>
            <person name="Wen Y."/>
            <person name="Yao Z."/>
            <person name="Shen Y."/>
            <person name="Qiang B."/>
            <person name="Hou Y."/>
            <person name="Yu J."/>
            <person name="Jin Q."/>
        </authorList>
    </citation>
    <scope>NUCLEOTIDE SEQUENCE [LARGE SCALE GENOMIC DNA]</scope>
    <source>
        <strain>Ss046</strain>
    </source>
</reference>
<sequence length="474" mass="50830">MQHKLLINGELVSGEGEKQPVYNPATGDVLLEIAEASAEQVDAAVRAADAAFAEWGQTTPKVRAECLLKLADVIEENGQVFAELESRNCGKPLHSAFNDEIPAIVDVFRFFAGAARCLNGLAAGEYLEGHTSMIRRDPLGVVASIAPWNYPLMMAAWKLAPALAAGNCVVLKPSEITPLTALKLAELAKDIFPAGVINILFGRGKTVGDPLTGHPKVRMVSLTGSIATGEHIISHAASSIKRTHMELGGKAPVIVFDDADIEAVVEGVRTFGYYNAGQDCTAACRIYAQKGIYDTLVEKLGAAVATLKSGAPDDESTELGPLSSLAHLERVSKAVEEAKATGHIKVITGGEKRKGNGYYYAPTLLAGALQDDAIVQKEVFGPVVSVTPFDNEEQVVNWANDSQYGLASSVWTKDVGRAHRVSARLQYGCTWVNTHFMLVSEMPHGGQKLSGYGKDMSLYGLEDYTVVRHVMVKH</sequence>
<protein>
    <recommendedName>
        <fullName evidence="1">Gamma-aminobutyraldehyde dehydrogenase</fullName>
        <shortName evidence="1">ABALDH</shortName>
        <ecNumber evidence="1">1.2.1.19</ecNumber>
    </recommendedName>
    <alternativeName>
        <fullName evidence="1">1-pyrroline dehydrogenase</fullName>
    </alternativeName>
    <alternativeName>
        <fullName evidence="1">4-aminobutanal dehydrogenase</fullName>
    </alternativeName>
    <alternativeName>
        <fullName evidence="1">5-aminopentanal dehydrogenase</fullName>
        <ecNumber evidence="1">1.2.1.-</ecNumber>
    </alternativeName>
</protein>
<organism>
    <name type="scientific">Shigella sonnei (strain Ss046)</name>
    <dbReference type="NCBI Taxonomy" id="300269"/>
    <lineage>
        <taxon>Bacteria</taxon>
        <taxon>Pseudomonadati</taxon>
        <taxon>Pseudomonadota</taxon>
        <taxon>Gammaproteobacteria</taxon>
        <taxon>Enterobacterales</taxon>
        <taxon>Enterobacteriaceae</taxon>
        <taxon>Shigella</taxon>
    </lineage>
</organism>
<accession>Q3Z1H6</accession>
<evidence type="ECO:0000255" key="1">
    <source>
        <dbReference type="HAMAP-Rule" id="MF_01275"/>
    </source>
</evidence>
<gene>
    <name evidence="1" type="primary">patD</name>
    <name type="ordered locus">SSON_1693</name>
</gene>
<feature type="chain" id="PRO_0000269703" description="Gamma-aminobutyraldehyde dehydrogenase">
    <location>
        <begin position="1"/>
        <end position="474"/>
    </location>
</feature>
<feature type="active site" evidence="1">
    <location>
        <position position="246"/>
    </location>
</feature>
<feature type="active site" description="Nucleophile" evidence="1">
    <location>
        <position position="280"/>
    </location>
</feature>
<feature type="binding site" evidence="1">
    <location>
        <begin position="146"/>
        <end position="148"/>
    </location>
    <ligand>
        <name>NAD(+)</name>
        <dbReference type="ChEBI" id="CHEBI:57540"/>
    </ligand>
</feature>
<feature type="binding site" evidence="1">
    <location>
        <begin position="172"/>
        <end position="175"/>
    </location>
    <ligand>
        <name>NAD(+)</name>
        <dbReference type="ChEBI" id="CHEBI:57540"/>
    </ligand>
</feature>
<feature type="binding site" evidence="1">
    <location>
        <position position="209"/>
    </location>
    <ligand>
        <name>NAD(+)</name>
        <dbReference type="ChEBI" id="CHEBI:57540"/>
    </ligand>
</feature>
<feature type="binding site" evidence="1">
    <location>
        <begin position="225"/>
        <end position="228"/>
    </location>
    <ligand>
        <name>NAD(+)</name>
        <dbReference type="ChEBI" id="CHEBI:57540"/>
    </ligand>
</feature>
<feature type="binding site" evidence="1">
    <location>
        <position position="280"/>
    </location>
    <ligand>
        <name>NAD(+)</name>
        <dbReference type="ChEBI" id="CHEBI:57540"/>
    </ligand>
</feature>
<comment type="function">
    <text evidence="1">Catalyzes the oxidation 4-aminobutanal (gamma-aminobutyraldehyde) to 4-aminobutanoate (gamma-aminobutyrate or GABA). This is the second step in one of two pathways for putrescine degradation, where putrescine is converted into 4-aminobutanoate via 4-aminobutanal. Also functions as a 5-aminopentanal dehydrogenase in a a L-lysine degradation pathway to succinate that proceeds via cadaverine, glutarate and L-2-hydroxyglutarate.</text>
</comment>
<comment type="catalytic activity">
    <reaction evidence="1">
        <text>4-aminobutanal + NAD(+) + H2O = 4-aminobutanoate + NADH + 2 H(+)</text>
        <dbReference type="Rhea" id="RHEA:19105"/>
        <dbReference type="ChEBI" id="CHEBI:15377"/>
        <dbReference type="ChEBI" id="CHEBI:15378"/>
        <dbReference type="ChEBI" id="CHEBI:57540"/>
        <dbReference type="ChEBI" id="CHEBI:57945"/>
        <dbReference type="ChEBI" id="CHEBI:58264"/>
        <dbReference type="ChEBI" id="CHEBI:59888"/>
        <dbReference type="EC" id="1.2.1.19"/>
    </reaction>
    <physiologicalReaction direction="left-to-right" evidence="1">
        <dbReference type="Rhea" id="RHEA:19106"/>
    </physiologicalReaction>
</comment>
<comment type="catalytic activity">
    <reaction evidence="1">
        <text>5-aminopentanal + NAD(+) + H2O = 5-aminopentanoate + NADH + 2 H(+)</text>
        <dbReference type="Rhea" id="RHEA:61632"/>
        <dbReference type="ChEBI" id="CHEBI:15377"/>
        <dbReference type="ChEBI" id="CHEBI:15378"/>
        <dbReference type="ChEBI" id="CHEBI:57540"/>
        <dbReference type="ChEBI" id="CHEBI:57945"/>
        <dbReference type="ChEBI" id="CHEBI:144896"/>
        <dbReference type="ChEBI" id="CHEBI:356010"/>
    </reaction>
    <physiologicalReaction direction="left-to-right" evidence="1">
        <dbReference type="Rhea" id="RHEA:61633"/>
    </physiologicalReaction>
</comment>
<comment type="pathway">
    <text evidence="1">Amine and polyamine degradation; putrescine degradation; 4-aminobutanoate from 4-aminobutanal: step 1/1.</text>
</comment>
<comment type="pathway">
    <text evidence="1">Amino-acid degradation.</text>
</comment>
<comment type="subunit">
    <text evidence="1">Homotetramer.</text>
</comment>
<comment type="miscellaneous">
    <text evidence="1">4-aminobutanal can spontaneously cyclize to 1-pyrroline, and 5-aminopentanal to 1-piperideine.</text>
</comment>
<comment type="similarity">
    <text evidence="1">Belongs to the aldehyde dehydrogenase family. Gamma-aminobutyraldehyde dehydrogenase subfamily.</text>
</comment>
<dbReference type="EC" id="1.2.1.19" evidence="1"/>
<dbReference type="EC" id="1.2.1.-" evidence="1"/>
<dbReference type="EMBL" id="CP000038">
    <property type="protein sequence ID" value="AAZ88386.1"/>
    <property type="molecule type" value="Genomic_DNA"/>
</dbReference>
<dbReference type="RefSeq" id="WP_001163871.1">
    <property type="nucleotide sequence ID" value="NC_007384.1"/>
</dbReference>
<dbReference type="SMR" id="Q3Z1H6"/>
<dbReference type="KEGG" id="ssn:SSON_1693"/>
<dbReference type="HOGENOM" id="CLU_005391_1_0_6"/>
<dbReference type="UniPathway" id="UPA00188">
    <property type="reaction ID" value="UER00292"/>
</dbReference>
<dbReference type="Proteomes" id="UP000002529">
    <property type="component" value="Chromosome"/>
</dbReference>
<dbReference type="GO" id="GO:0019145">
    <property type="term" value="F:aminobutyraldehyde dehydrogenase (NAD+) activity"/>
    <property type="evidence" value="ECO:0007669"/>
    <property type="project" value="UniProtKB-UniRule"/>
</dbReference>
<dbReference type="GO" id="GO:0051287">
    <property type="term" value="F:NAD binding"/>
    <property type="evidence" value="ECO:0007669"/>
    <property type="project" value="UniProtKB-UniRule"/>
</dbReference>
<dbReference type="GO" id="GO:0019477">
    <property type="term" value="P:L-lysine catabolic process"/>
    <property type="evidence" value="ECO:0007669"/>
    <property type="project" value="UniProtKB-UniRule"/>
</dbReference>
<dbReference type="GO" id="GO:0009447">
    <property type="term" value="P:putrescine catabolic process"/>
    <property type="evidence" value="ECO:0007669"/>
    <property type="project" value="UniProtKB-UniRule"/>
</dbReference>
<dbReference type="CDD" id="cd07092">
    <property type="entry name" value="ALDH_ABALDH-YdcW"/>
    <property type="match status" value="1"/>
</dbReference>
<dbReference type="FunFam" id="3.40.605.10:FF:000001">
    <property type="entry name" value="Aldehyde dehydrogenase 1"/>
    <property type="match status" value="1"/>
</dbReference>
<dbReference type="FunFam" id="3.40.309.10:FF:000010">
    <property type="entry name" value="Gamma-aminobutyraldehyde dehydrogenase"/>
    <property type="match status" value="1"/>
</dbReference>
<dbReference type="Gene3D" id="3.40.605.10">
    <property type="entry name" value="Aldehyde Dehydrogenase, Chain A, domain 1"/>
    <property type="match status" value="1"/>
</dbReference>
<dbReference type="Gene3D" id="3.40.309.10">
    <property type="entry name" value="Aldehyde Dehydrogenase, Chain A, domain 2"/>
    <property type="match status" value="1"/>
</dbReference>
<dbReference type="HAMAP" id="MF_01275">
    <property type="entry name" value="Aldedh_Prr"/>
    <property type="match status" value="1"/>
</dbReference>
<dbReference type="InterPro" id="IPR016161">
    <property type="entry name" value="Ald_DH/histidinol_DH"/>
</dbReference>
<dbReference type="InterPro" id="IPR016163">
    <property type="entry name" value="Ald_DH_C"/>
</dbReference>
<dbReference type="InterPro" id="IPR029510">
    <property type="entry name" value="Ald_DH_CS_GLU"/>
</dbReference>
<dbReference type="InterPro" id="IPR016162">
    <property type="entry name" value="Ald_DH_N"/>
</dbReference>
<dbReference type="InterPro" id="IPR015590">
    <property type="entry name" value="Aldehyde_DH_dom"/>
</dbReference>
<dbReference type="InterPro" id="IPR015657">
    <property type="entry name" value="Aminobutyraldehyde_DH"/>
</dbReference>
<dbReference type="InterPro" id="IPR017749">
    <property type="entry name" value="PatD"/>
</dbReference>
<dbReference type="NCBIfam" id="TIGR03374">
    <property type="entry name" value="ABALDH"/>
    <property type="match status" value="1"/>
</dbReference>
<dbReference type="NCBIfam" id="NF010000">
    <property type="entry name" value="PRK13473.1"/>
    <property type="match status" value="1"/>
</dbReference>
<dbReference type="PANTHER" id="PTHR11699">
    <property type="entry name" value="ALDEHYDE DEHYDROGENASE-RELATED"/>
    <property type="match status" value="1"/>
</dbReference>
<dbReference type="Pfam" id="PF00171">
    <property type="entry name" value="Aldedh"/>
    <property type="match status" value="1"/>
</dbReference>
<dbReference type="SUPFAM" id="SSF53720">
    <property type="entry name" value="ALDH-like"/>
    <property type="match status" value="1"/>
</dbReference>
<dbReference type="PROSITE" id="PS00687">
    <property type="entry name" value="ALDEHYDE_DEHYDR_GLU"/>
    <property type="match status" value="1"/>
</dbReference>